<accession>Q0ICR0</accession>
<organism>
    <name type="scientific">Synechococcus sp. (strain CC9311)</name>
    <dbReference type="NCBI Taxonomy" id="64471"/>
    <lineage>
        <taxon>Bacteria</taxon>
        <taxon>Bacillati</taxon>
        <taxon>Cyanobacteriota</taxon>
        <taxon>Cyanophyceae</taxon>
        <taxon>Synechococcales</taxon>
        <taxon>Synechococcaceae</taxon>
        <taxon>Synechococcus</taxon>
    </lineage>
</organism>
<reference key="1">
    <citation type="journal article" date="2006" name="Proc. Natl. Acad. Sci. U.S.A.">
        <title>Genome sequence of Synechococcus CC9311: insights into adaptation to a coastal environment.</title>
        <authorList>
            <person name="Palenik B."/>
            <person name="Ren Q."/>
            <person name="Dupont C.L."/>
            <person name="Myers G.S."/>
            <person name="Heidelberg J.F."/>
            <person name="Badger J.H."/>
            <person name="Madupu R."/>
            <person name="Nelson W.C."/>
            <person name="Brinkac L.M."/>
            <person name="Dodson R.J."/>
            <person name="Durkin A.S."/>
            <person name="Daugherty S.C."/>
            <person name="Sullivan S.A."/>
            <person name="Khouri H."/>
            <person name="Mohamoud Y."/>
            <person name="Halpin R."/>
            <person name="Paulsen I.T."/>
        </authorList>
    </citation>
    <scope>NUCLEOTIDE SEQUENCE [LARGE SCALE GENOMIC DNA]</scope>
    <source>
        <strain>CC9311</strain>
    </source>
</reference>
<comment type="function">
    <text evidence="1">One of the components of the core complex of photosystem II (PSII). PSII is a light-driven water:plastoquinone oxidoreductase that uses light energy to abstract electrons from H(2)O, generating O(2) and a proton gradient subsequently used for ATP formation. It consists of a core antenna complex that captures photons, and an electron transfer chain that converts photonic excitation into a charge separation. This subunit is found at the monomer-monomer interface.</text>
</comment>
<comment type="subunit">
    <text evidence="1">PSII is composed of 1 copy each of membrane proteins PsbA, PsbB, PsbC, PsbD, PsbE, PsbF, PsbH, PsbI, PsbJ, PsbK, PsbL, PsbM, PsbT, PsbX, PsbY, PsbZ, Psb30/Ycf12, peripheral proteins PsbO, CyanoQ (PsbQ), PsbU, PsbV and a large number of cofactors. It forms dimeric complexes.</text>
</comment>
<comment type="subcellular location">
    <subcellularLocation>
        <location evidence="1">Cellular thylakoid membrane</location>
        <topology evidence="1">Single-pass membrane protein</topology>
    </subcellularLocation>
</comment>
<comment type="similarity">
    <text evidence="1">Belongs to the PsbM family.</text>
</comment>
<name>PSBM_SYNS3</name>
<keyword id="KW-0472">Membrane</keyword>
<keyword id="KW-0602">Photosynthesis</keyword>
<keyword id="KW-0604">Photosystem II</keyword>
<keyword id="KW-0674">Reaction center</keyword>
<keyword id="KW-1185">Reference proteome</keyword>
<keyword id="KW-0793">Thylakoid</keyword>
<keyword id="KW-0812">Transmembrane</keyword>
<keyword id="KW-1133">Transmembrane helix</keyword>
<proteinExistence type="inferred from homology"/>
<gene>
    <name evidence="1" type="primary">psbM</name>
    <name type="ordered locus">sync_0536</name>
</gene>
<dbReference type="EMBL" id="CP000435">
    <property type="protein sequence ID" value="ABI47346.1"/>
    <property type="molecule type" value="Genomic_DNA"/>
</dbReference>
<dbReference type="RefSeq" id="WP_006854919.1">
    <property type="nucleotide sequence ID" value="NC_008319.1"/>
</dbReference>
<dbReference type="SMR" id="Q0ICR0"/>
<dbReference type="STRING" id="64471.sync_0536"/>
<dbReference type="KEGG" id="syg:sync_0536"/>
<dbReference type="eggNOG" id="ENOG50339PB">
    <property type="taxonomic scope" value="Bacteria"/>
</dbReference>
<dbReference type="HOGENOM" id="CLU_215415_0_0_3"/>
<dbReference type="OrthoDB" id="532820at2"/>
<dbReference type="Proteomes" id="UP000001961">
    <property type="component" value="Chromosome"/>
</dbReference>
<dbReference type="GO" id="GO:0009523">
    <property type="term" value="C:photosystem II"/>
    <property type="evidence" value="ECO:0007669"/>
    <property type="project" value="UniProtKB-KW"/>
</dbReference>
<dbReference type="GO" id="GO:0031676">
    <property type="term" value="C:plasma membrane-derived thylakoid membrane"/>
    <property type="evidence" value="ECO:0007669"/>
    <property type="project" value="UniProtKB-SubCell"/>
</dbReference>
<dbReference type="GO" id="GO:0019684">
    <property type="term" value="P:photosynthesis, light reaction"/>
    <property type="evidence" value="ECO:0007669"/>
    <property type="project" value="InterPro"/>
</dbReference>
<dbReference type="HAMAP" id="MF_00438">
    <property type="entry name" value="PSII_PsbM"/>
    <property type="match status" value="1"/>
</dbReference>
<dbReference type="InterPro" id="IPR007826">
    <property type="entry name" value="PSII_PsbM"/>
</dbReference>
<dbReference type="InterPro" id="IPR037269">
    <property type="entry name" value="PSII_PsbM_sf"/>
</dbReference>
<dbReference type="NCBIfam" id="TIGR03038">
    <property type="entry name" value="PS_II_psbM"/>
    <property type="match status" value="1"/>
</dbReference>
<dbReference type="Pfam" id="PF05151">
    <property type="entry name" value="PsbM"/>
    <property type="match status" value="1"/>
</dbReference>
<dbReference type="SUPFAM" id="SSF161033">
    <property type="entry name" value="Photosystem II reaction center protein M, PsbM"/>
    <property type="match status" value="1"/>
</dbReference>
<protein>
    <recommendedName>
        <fullName evidence="1">Photosystem II reaction center protein M</fullName>
        <shortName evidence="1">PSII-M</shortName>
    </recommendedName>
</protein>
<sequence>METNDLGFVASLMFVLVPTVFLIVLFIQTNSREGSS</sequence>
<feature type="chain" id="PRO_1000025963" description="Photosystem II reaction center protein M">
    <location>
        <begin position="1"/>
        <end position="36"/>
    </location>
</feature>
<feature type="transmembrane region" description="Helical" evidence="1">
    <location>
        <begin position="7"/>
        <end position="27"/>
    </location>
</feature>
<evidence type="ECO:0000255" key="1">
    <source>
        <dbReference type="HAMAP-Rule" id="MF_00438"/>
    </source>
</evidence>